<reference key="1">
    <citation type="journal article" date="2007" name="J. Bacteriol.">
        <title>Genome sequence of Avery's virulent serotype 2 strain D39 of Streptococcus pneumoniae and comparison with that of unencapsulated laboratory strain R6.</title>
        <authorList>
            <person name="Lanie J.A."/>
            <person name="Ng W.-L."/>
            <person name="Kazmierczak K.M."/>
            <person name="Andrzejewski T.M."/>
            <person name="Davidsen T.M."/>
            <person name="Wayne K.J."/>
            <person name="Tettelin H."/>
            <person name="Glass J.I."/>
            <person name="Winkler M.E."/>
        </authorList>
    </citation>
    <scope>NUCLEOTIDE SEQUENCE [LARGE SCALE GENOMIC DNA]</scope>
    <source>
        <strain>D39 / NCTC 7466</strain>
    </source>
</reference>
<organism>
    <name type="scientific">Streptococcus pneumoniae serotype 2 (strain D39 / NCTC 7466)</name>
    <dbReference type="NCBI Taxonomy" id="373153"/>
    <lineage>
        <taxon>Bacteria</taxon>
        <taxon>Bacillati</taxon>
        <taxon>Bacillota</taxon>
        <taxon>Bacilli</taxon>
        <taxon>Lactobacillales</taxon>
        <taxon>Streptococcaceae</taxon>
        <taxon>Streptococcus</taxon>
    </lineage>
</organism>
<evidence type="ECO:0000255" key="1">
    <source>
        <dbReference type="HAMAP-Rule" id="MF_00101"/>
    </source>
</evidence>
<dbReference type="EC" id="2.7.8.7" evidence="1"/>
<dbReference type="EMBL" id="CP000410">
    <property type="protein sequence ID" value="ABJ54171.1"/>
    <property type="molecule type" value="Genomic_DNA"/>
</dbReference>
<dbReference type="RefSeq" id="WP_000635008.1">
    <property type="nucleotide sequence ID" value="NZ_JAMLJR010000003.1"/>
</dbReference>
<dbReference type="SMR" id="Q04J73"/>
<dbReference type="PaxDb" id="373153-SPD_1509"/>
<dbReference type="KEGG" id="spd:SPD_1509"/>
<dbReference type="eggNOG" id="COG0736">
    <property type="taxonomic scope" value="Bacteria"/>
</dbReference>
<dbReference type="HOGENOM" id="CLU_089696_1_2_9"/>
<dbReference type="Proteomes" id="UP000001452">
    <property type="component" value="Chromosome"/>
</dbReference>
<dbReference type="GO" id="GO:0005829">
    <property type="term" value="C:cytosol"/>
    <property type="evidence" value="ECO:0007669"/>
    <property type="project" value="TreeGrafter"/>
</dbReference>
<dbReference type="GO" id="GO:0008897">
    <property type="term" value="F:holo-[acyl-carrier-protein] synthase activity"/>
    <property type="evidence" value="ECO:0007669"/>
    <property type="project" value="UniProtKB-UniRule"/>
</dbReference>
<dbReference type="GO" id="GO:0000287">
    <property type="term" value="F:magnesium ion binding"/>
    <property type="evidence" value="ECO:0007669"/>
    <property type="project" value="UniProtKB-UniRule"/>
</dbReference>
<dbReference type="GO" id="GO:0006633">
    <property type="term" value="P:fatty acid biosynthetic process"/>
    <property type="evidence" value="ECO:0007669"/>
    <property type="project" value="UniProtKB-UniRule"/>
</dbReference>
<dbReference type="GO" id="GO:0019878">
    <property type="term" value="P:lysine biosynthetic process via aminoadipic acid"/>
    <property type="evidence" value="ECO:0007669"/>
    <property type="project" value="TreeGrafter"/>
</dbReference>
<dbReference type="Gene3D" id="3.90.470.20">
    <property type="entry name" value="4'-phosphopantetheinyl transferase domain"/>
    <property type="match status" value="1"/>
</dbReference>
<dbReference type="HAMAP" id="MF_00101">
    <property type="entry name" value="AcpS"/>
    <property type="match status" value="1"/>
</dbReference>
<dbReference type="InterPro" id="IPR008278">
    <property type="entry name" value="4-PPantetheinyl_Trfase_dom"/>
</dbReference>
<dbReference type="InterPro" id="IPR037143">
    <property type="entry name" value="4-PPantetheinyl_Trfase_dom_sf"/>
</dbReference>
<dbReference type="InterPro" id="IPR002582">
    <property type="entry name" value="ACPS"/>
</dbReference>
<dbReference type="InterPro" id="IPR050559">
    <property type="entry name" value="P-Pant_transferase_sf"/>
</dbReference>
<dbReference type="InterPro" id="IPR004568">
    <property type="entry name" value="Ppantetheine-prot_Trfase_dom"/>
</dbReference>
<dbReference type="NCBIfam" id="TIGR00516">
    <property type="entry name" value="acpS"/>
    <property type="match status" value="1"/>
</dbReference>
<dbReference type="NCBIfam" id="TIGR00556">
    <property type="entry name" value="pantethn_trn"/>
    <property type="match status" value="1"/>
</dbReference>
<dbReference type="PANTHER" id="PTHR12215:SF10">
    <property type="entry name" value="L-AMINOADIPATE-SEMIALDEHYDE DEHYDROGENASE-PHOSPHOPANTETHEINYL TRANSFERASE"/>
    <property type="match status" value="1"/>
</dbReference>
<dbReference type="PANTHER" id="PTHR12215">
    <property type="entry name" value="PHOSPHOPANTETHEINE TRANSFERASE"/>
    <property type="match status" value="1"/>
</dbReference>
<dbReference type="Pfam" id="PF01648">
    <property type="entry name" value="ACPS"/>
    <property type="match status" value="1"/>
</dbReference>
<dbReference type="SUPFAM" id="SSF56214">
    <property type="entry name" value="4'-phosphopantetheinyl transferase"/>
    <property type="match status" value="1"/>
</dbReference>
<accession>Q04J73</accession>
<name>ACPS_STRP2</name>
<feature type="chain" id="PRO_1000008509" description="Holo-[acyl-carrier-protein] synthase">
    <location>
        <begin position="1"/>
        <end position="120"/>
    </location>
</feature>
<feature type="binding site" evidence="1">
    <location>
        <position position="8"/>
    </location>
    <ligand>
        <name>Mg(2+)</name>
        <dbReference type="ChEBI" id="CHEBI:18420"/>
    </ligand>
</feature>
<feature type="binding site" evidence="1">
    <location>
        <position position="58"/>
    </location>
    <ligand>
        <name>Mg(2+)</name>
        <dbReference type="ChEBI" id="CHEBI:18420"/>
    </ligand>
</feature>
<proteinExistence type="inferred from homology"/>
<gene>
    <name evidence="1" type="primary">acpS</name>
    <name type="ordered locus">SPD_1509</name>
</gene>
<protein>
    <recommendedName>
        <fullName evidence="1">Holo-[acyl-carrier-protein] synthase</fullName>
        <shortName evidence="1">Holo-ACP synthase</shortName>
        <ecNumber evidence="1">2.7.8.7</ecNumber>
    </recommendedName>
    <alternativeName>
        <fullName evidence="1">4'-phosphopantetheinyl transferase AcpS</fullName>
    </alternativeName>
</protein>
<keyword id="KW-0963">Cytoplasm</keyword>
<keyword id="KW-0275">Fatty acid biosynthesis</keyword>
<keyword id="KW-0276">Fatty acid metabolism</keyword>
<keyword id="KW-0444">Lipid biosynthesis</keyword>
<keyword id="KW-0443">Lipid metabolism</keyword>
<keyword id="KW-0460">Magnesium</keyword>
<keyword id="KW-0479">Metal-binding</keyword>
<keyword id="KW-1185">Reference proteome</keyword>
<keyword id="KW-0808">Transferase</keyword>
<comment type="function">
    <text evidence="1">Transfers the 4'-phosphopantetheine moiety from coenzyme A to a Ser of acyl-carrier-protein.</text>
</comment>
<comment type="catalytic activity">
    <reaction evidence="1">
        <text>apo-[ACP] + CoA = holo-[ACP] + adenosine 3',5'-bisphosphate + H(+)</text>
        <dbReference type="Rhea" id="RHEA:12068"/>
        <dbReference type="Rhea" id="RHEA-COMP:9685"/>
        <dbReference type="Rhea" id="RHEA-COMP:9690"/>
        <dbReference type="ChEBI" id="CHEBI:15378"/>
        <dbReference type="ChEBI" id="CHEBI:29999"/>
        <dbReference type="ChEBI" id="CHEBI:57287"/>
        <dbReference type="ChEBI" id="CHEBI:58343"/>
        <dbReference type="ChEBI" id="CHEBI:64479"/>
        <dbReference type="EC" id="2.7.8.7"/>
    </reaction>
</comment>
<comment type="cofactor">
    <cofactor evidence="1">
        <name>Mg(2+)</name>
        <dbReference type="ChEBI" id="CHEBI:18420"/>
    </cofactor>
</comment>
<comment type="subcellular location">
    <subcellularLocation>
        <location evidence="1">Cytoplasm</location>
    </subcellularLocation>
</comment>
<comment type="similarity">
    <text evidence="1">Belongs to the P-Pant transferase superfamily. AcpS family.</text>
</comment>
<sequence length="120" mass="13388">MIVGHGIDIEELASIESAVTRHEGFAKRVLTAQEMERFTSLKGRRQIEYLAGRWSAKEAFSKAMGTGISKLGFQDLEVLNNERGAPYFSQAPFSGKIWLSISHTDQFVTASVILEENHES</sequence>